<evidence type="ECO:0000255" key="1">
    <source>
        <dbReference type="HAMAP-Rule" id="MF_00355"/>
    </source>
</evidence>
<sequence length="287" mass="30900">MIIAVYGKGGVGKSTTTSNLAVAIAKTGRRVLQIGCDPKSDSTFTIAGRMIPTVVEILDKFNYHYESIEPDDLVVQGYAGVCVVETGGPPAGSGCGGYVVGETVKLLEKLDIMRQYDVILFDVLGDVVCGGFATPLQYADLACIVSSNDFDALFAANRICESIVEKNASGYDVKLAGVIGNRCDQVDLLETFTRRIEAPLMGVVPRNEEVRQSRVKGYTLFELEEMGEPVSEMTGEFRKMAAYLLSQPDGVVPNAVGTREMFELFRGEDLPWKGSNGKTAASTPSVP</sequence>
<proteinExistence type="inferred from homology"/>
<comment type="function">
    <text evidence="1">Component of the dark-operative protochlorophyllide reductase (DPOR) that uses Mg-ATP and reduced ferredoxin to reduce ring D of protochlorophyllide (Pchlide) to form chlorophyllide a (Chlide). This reaction is light-independent. The L component serves as a unique electron donor to the NB-component of the complex, and binds Mg-ATP.</text>
</comment>
<comment type="catalytic activity">
    <reaction evidence="1">
        <text>chlorophyllide a + oxidized 2[4Fe-4S]-[ferredoxin] + 2 ADP + 2 phosphate = protochlorophyllide a + reduced 2[4Fe-4S]-[ferredoxin] + 2 ATP + 2 H2O</text>
        <dbReference type="Rhea" id="RHEA:28202"/>
        <dbReference type="Rhea" id="RHEA-COMP:10002"/>
        <dbReference type="Rhea" id="RHEA-COMP:10004"/>
        <dbReference type="ChEBI" id="CHEBI:15377"/>
        <dbReference type="ChEBI" id="CHEBI:30616"/>
        <dbReference type="ChEBI" id="CHEBI:33722"/>
        <dbReference type="ChEBI" id="CHEBI:33723"/>
        <dbReference type="ChEBI" id="CHEBI:43474"/>
        <dbReference type="ChEBI" id="CHEBI:83348"/>
        <dbReference type="ChEBI" id="CHEBI:83350"/>
        <dbReference type="ChEBI" id="CHEBI:456216"/>
        <dbReference type="EC" id="1.3.7.7"/>
    </reaction>
</comment>
<comment type="cofactor">
    <cofactor evidence="1">
        <name>[4Fe-4S] cluster</name>
        <dbReference type="ChEBI" id="CHEBI:49883"/>
    </cofactor>
    <text evidence="1">Binds 1 [4Fe-4S] cluster per dimer.</text>
</comment>
<comment type="pathway">
    <text evidence="1">Porphyrin-containing compound metabolism; bacteriochlorophyll biosynthesis (light-independent).</text>
</comment>
<comment type="subunit">
    <text evidence="1">Homodimer. Protochlorophyllide reductase is composed of three subunits; BchL, BchN and BchB.</text>
</comment>
<comment type="similarity">
    <text evidence="1">Belongs to the NifH/BchL/ChlL family.</text>
</comment>
<organism>
    <name type="scientific">Heliobacterium modesticaldum (strain ATCC 51547 / Ice1)</name>
    <dbReference type="NCBI Taxonomy" id="498761"/>
    <lineage>
        <taxon>Bacteria</taxon>
        <taxon>Bacillati</taxon>
        <taxon>Bacillota</taxon>
        <taxon>Clostridia</taxon>
        <taxon>Eubacteriales</taxon>
        <taxon>Heliobacteriaceae</taxon>
        <taxon>Heliomicrobium</taxon>
    </lineage>
</organism>
<protein>
    <recommendedName>
        <fullName evidence="1">Light-independent protochlorophyllide reductase iron-sulfur ATP-binding protein</fullName>
        <shortName evidence="1">DPOR subunit L</shortName>
        <shortName evidence="1">LI-POR subunit L</shortName>
        <ecNumber evidence="1">1.3.7.7</ecNumber>
    </recommendedName>
</protein>
<accession>B0TBM6</accession>
<dbReference type="EC" id="1.3.7.7" evidence="1"/>
<dbReference type="EMBL" id="CP000930">
    <property type="protein sequence ID" value="ABZ83865.1"/>
    <property type="molecule type" value="Genomic_DNA"/>
</dbReference>
<dbReference type="RefSeq" id="WP_012282383.1">
    <property type="nucleotide sequence ID" value="NC_010337.2"/>
</dbReference>
<dbReference type="SMR" id="B0TBM6"/>
<dbReference type="STRING" id="498761.HM1_0687"/>
<dbReference type="KEGG" id="hmo:HM1_0687"/>
<dbReference type="eggNOG" id="COG1348">
    <property type="taxonomic scope" value="Bacteria"/>
</dbReference>
<dbReference type="HOGENOM" id="CLU_059373_2_0_9"/>
<dbReference type="OrthoDB" id="9778641at2"/>
<dbReference type="UniPathway" id="UPA00671"/>
<dbReference type="Proteomes" id="UP000008550">
    <property type="component" value="Chromosome"/>
</dbReference>
<dbReference type="GO" id="GO:0051539">
    <property type="term" value="F:4 iron, 4 sulfur cluster binding"/>
    <property type="evidence" value="ECO:0007669"/>
    <property type="project" value="UniProtKB-UniRule"/>
</dbReference>
<dbReference type="GO" id="GO:0005524">
    <property type="term" value="F:ATP binding"/>
    <property type="evidence" value="ECO:0007669"/>
    <property type="project" value="UniProtKB-UniRule"/>
</dbReference>
<dbReference type="GO" id="GO:0046872">
    <property type="term" value="F:metal ion binding"/>
    <property type="evidence" value="ECO:0007669"/>
    <property type="project" value="UniProtKB-KW"/>
</dbReference>
<dbReference type="GO" id="GO:0016730">
    <property type="term" value="F:oxidoreductase activity, acting on iron-sulfur proteins as donors"/>
    <property type="evidence" value="ECO:0007669"/>
    <property type="project" value="InterPro"/>
</dbReference>
<dbReference type="GO" id="GO:0016636">
    <property type="term" value="F:oxidoreductase activity, acting on the CH-CH group of donors, iron-sulfur protein as acceptor"/>
    <property type="evidence" value="ECO:0007669"/>
    <property type="project" value="UniProtKB-UniRule"/>
</dbReference>
<dbReference type="GO" id="GO:0036070">
    <property type="term" value="P:light-independent bacteriochlorophyll biosynthetic process"/>
    <property type="evidence" value="ECO:0007669"/>
    <property type="project" value="UniProtKB-UniRule"/>
</dbReference>
<dbReference type="GO" id="GO:0019685">
    <property type="term" value="P:photosynthesis, dark reaction"/>
    <property type="evidence" value="ECO:0007669"/>
    <property type="project" value="InterPro"/>
</dbReference>
<dbReference type="Gene3D" id="3.40.50.300">
    <property type="entry name" value="P-loop containing nucleotide triphosphate hydrolases"/>
    <property type="match status" value="1"/>
</dbReference>
<dbReference type="HAMAP" id="MF_00355">
    <property type="entry name" value="ChlL_BchL"/>
    <property type="match status" value="1"/>
</dbReference>
<dbReference type="InterPro" id="IPR030655">
    <property type="entry name" value="NifH/chlL_CS"/>
</dbReference>
<dbReference type="InterPro" id="IPR000392">
    <property type="entry name" value="NifH/frxC"/>
</dbReference>
<dbReference type="InterPro" id="IPR027417">
    <property type="entry name" value="P-loop_NTPase"/>
</dbReference>
<dbReference type="InterPro" id="IPR005971">
    <property type="entry name" value="Protochlorophyllide_ATP-bd"/>
</dbReference>
<dbReference type="NCBIfam" id="TIGR01281">
    <property type="entry name" value="DPOR_bchL"/>
    <property type="match status" value="1"/>
</dbReference>
<dbReference type="PANTHER" id="PTHR42864">
    <property type="entry name" value="LIGHT-INDEPENDENT PROTOCHLOROPHYLLIDE REDUCTASE IRON-SULFUR ATP-BINDING PROTEIN"/>
    <property type="match status" value="1"/>
</dbReference>
<dbReference type="PANTHER" id="PTHR42864:SF2">
    <property type="entry name" value="LIGHT-INDEPENDENT PROTOCHLOROPHYLLIDE REDUCTASE IRON-SULFUR ATP-BINDING PROTEIN"/>
    <property type="match status" value="1"/>
</dbReference>
<dbReference type="Pfam" id="PF00142">
    <property type="entry name" value="Fer4_NifH"/>
    <property type="match status" value="1"/>
</dbReference>
<dbReference type="PIRSF" id="PIRSF000363">
    <property type="entry name" value="Nitrogenase_iron"/>
    <property type="match status" value="1"/>
</dbReference>
<dbReference type="PRINTS" id="PR00091">
    <property type="entry name" value="NITROGNASEII"/>
</dbReference>
<dbReference type="SUPFAM" id="SSF52540">
    <property type="entry name" value="P-loop containing nucleoside triphosphate hydrolases"/>
    <property type="match status" value="1"/>
</dbReference>
<dbReference type="PROSITE" id="PS00746">
    <property type="entry name" value="NIFH_FRXC_1"/>
    <property type="match status" value="1"/>
</dbReference>
<dbReference type="PROSITE" id="PS00692">
    <property type="entry name" value="NIFH_FRXC_2"/>
    <property type="match status" value="1"/>
</dbReference>
<dbReference type="PROSITE" id="PS51026">
    <property type="entry name" value="NIFH_FRXC_3"/>
    <property type="match status" value="1"/>
</dbReference>
<gene>
    <name evidence="1" type="primary">bchL</name>
    <name type="ordered locus">Helmi_12400</name>
    <name type="ORF">HM1_0687</name>
</gene>
<feature type="chain" id="PRO_1000120555" description="Light-independent protochlorophyllide reductase iron-sulfur ATP-binding protein">
    <location>
        <begin position="1"/>
        <end position="287"/>
    </location>
</feature>
<feature type="binding site" evidence="1">
    <location>
        <begin position="10"/>
        <end position="15"/>
    </location>
    <ligand>
        <name>ATP</name>
        <dbReference type="ChEBI" id="CHEBI:30616"/>
    </ligand>
</feature>
<feature type="binding site" evidence="1">
    <location>
        <position position="14"/>
    </location>
    <ligand>
        <name>Mg(2+)</name>
        <dbReference type="ChEBI" id="CHEBI:18420"/>
    </ligand>
</feature>
<feature type="binding site" evidence="1">
    <location>
        <position position="39"/>
    </location>
    <ligand>
        <name>ATP</name>
        <dbReference type="ChEBI" id="CHEBI:30616"/>
    </ligand>
</feature>
<feature type="binding site" evidence="1">
    <location>
        <position position="95"/>
    </location>
    <ligand>
        <name>[4Fe-4S] cluster</name>
        <dbReference type="ChEBI" id="CHEBI:49883"/>
        <note>ligand shared between dimeric partners</note>
    </ligand>
</feature>
<feature type="binding site" evidence="1">
    <location>
        <position position="129"/>
    </location>
    <ligand>
        <name>[4Fe-4S] cluster</name>
        <dbReference type="ChEBI" id="CHEBI:49883"/>
        <note>ligand shared between dimeric partners</note>
    </ligand>
</feature>
<feature type="binding site" evidence="1">
    <location>
        <begin position="181"/>
        <end position="182"/>
    </location>
    <ligand>
        <name>ATP</name>
        <dbReference type="ChEBI" id="CHEBI:30616"/>
    </ligand>
</feature>
<reference key="1">
    <citation type="journal article" date="2008" name="J. Bacteriol.">
        <title>The genome of Heliobacterium modesticaldum, a phototrophic representative of the Firmicutes containing the simplest photosynthetic apparatus.</title>
        <authorList>
            <person name="Sattley W.M."/>
            <person name="Madigan M.T."/>
            <person name="Swingley W.D."/>
            <person name="Cheung P.C."/>
            <person name="Clocksin K.M."/>
            <person name="Conrad A.L."/>
            <person name="Dejesa L.C."/>
            <person name="Honchak B.M."/>
            <person name="Jung D.O."/>
            <person name="Karbach L.E."/>
            <person name="Kurdoglu A."/>
            <person name="Lahiri S."/>
            <person name="Mastrian S.D."/>
            <person name="Page L.E."/>
            <person name="Taylor H.L."/>
            <person name="Wang Z.T."/>
            <person name="Raymond J."/>
            <person name="Chen M."/>
            <person name="Blankenship R.E."/>
            <person name="Touchman J.W."/>
        </authorList>
    </citation>
    <scope>NUCLEOTIDE SEQUENCE [LARGE SCALE GENOMIC DNA]</scope>
    <source>
        <strain>ATCC 51547 / Ice1</strain>
    </source>
</reference>
<name>BCHL_HELMI</name>
<keyword id="KW-0004">4Fe-4S</keyword>
<keyword id="KW-0067">ATP-binding</keyword>
<keyword id="KW-0077">Bacteriochlorophyll biosynthesis</keyword>
<keyword id="KW-0149">Chlorophyll biosynthesis</keyword>
<keyword id="KW-0408">Iron</keyword>
<keyword id="KW-0411">Iron-sulfur</keyword>
<keyword id="KW-0460">Magnesium</keyword>
<keyword id="KW-0479">Metal-binding</keyword>
<keyword id="KW-0547">Nucleotide-binding</keyword>
<keyword id="KW-0560">Oxidoreductase</keyword>
<keyword id="KW-0602">Photosynthesis</keyword>
<keyword id="KW-1185">Reference proteome</keyword>